<sequence>MKTNELRNLTTAEIEQKTKSLKEELFNLRFQLATGQLDNPTRIREVRKNIARAKTVLRERELGINNG</sequence>
<comment type="similarity">
    <text evidence="1">Belongs to the universal ribosomal protein uL29 family.</text>
</comment>
<comment type="sequence caution" evidence="1">
    <conflict type="erroneous initiation">
        <sequence resource="EMBL-CDS" id="BAA75279"/>
    </conflict>
</comment>
<proteinExistence type="inferred from homology"/>
<reference key="1">
    <citation type="journal article" date="1999" name="Biosci. Biotechnol. Biochem.">
        <title>Sequence analysis of a 32-kb region including the major ribosomal protein gene clusters from alkaliphilic Bacillus sp. strain C-125.</title>
        <authorList>
            <person name="Takami H."/>
            <person name="Takaki Y."/>
            <person name="Nakasone K."/>
            <person name="Hirama C."/>
            <person name="Inoue A."/>
            <person name="Horikoshi K."/>
        </authorList>
    </citation>
    <scope>NUCLEOTIDE SEQUENCE [GENOMIC DNA]</scope>
    <source>
        <strain>ATCC BAA-125 / DSM 18197 / FERM 7344 / JCM 9153 / C-125</strain>
    </source>
</reference>
<reference key="2">
    <citation type="journal article" date="2000" name="Nucleic Acids Res.">
        <title>Complete genome sequence of the alkaliphilic bacterium Bacillus halodurans and genomic sequence comparison with Bacillus subtilis.</title>
        <authorList>
            <person name="Takami H."/>
            <person name="Nakasone K."/>
            <person name="Takaki Y."/>
            <person name="Maeno G."/>
            <person name="Sasaki R."/>
            <person name="Masui N."/>
            <person name="Fuji F."/>
            <person name="Hirama C."/>
            <person name="Nakamura Y."/>
            <person name="Ogasawara N."/>
            <person name="Kuhara S."/>
            <person name="Horikoshi K."/>
        </authorList>
    </citation>
    <scope>NUCLEOTIDE SEQUENCE [LARGE SCALE GENOMIC DNA]</scope>
    <source>
        <strain>ATCC BAA-125 / DSM 18197 / FERM 7344 / JCM 9153 / C-125</strain>
    </source>
</reference>
<gene>
    <name type="primary">rpmC</name>
    <name type="ordered locus">BH0142</name>
</gene>
<feature type="chain" id="PRO_0000130352" description="Large ribosomal subunit protein uL29">
    <location>
        <begin position="1"/>
        <end position="67"/>
    </location>
</feature>
<organism>
    <name type="scientific">Halalkalibacterium halodurans (strain ATCC BAA-125 / DSM 18197 / FERM 7344 / JCM 9153 / C-125)</name>
    <name type="common">Bacillus halodurans</name>
    <dbReference type="NCBI Taxonomy" id="272558"/>
    <lineage>
        <taxon>Bacteria</taxon>
        <taxon>Bacillati</taxon>
        <taxon>Bacillota</taxon>
        <taxon>Bacilli</taxon>
        <taxon>Bacillales</taxon>
        <taxon>Bacillaceae</taxon>
        <taxon>Halalkalibacterium (ex Joshi et al. 2022)</taxon>
    </lineage>
</organism>
<evidence type="ECO:0000305" key="1"/>
<dbReference type="EMBL" id="AB017508">
    <property type="protein sequence ID" value="BAA75279.1"/>
    <property type="status" value="ALT_INIT"/>
    <property type="molecule type" value="Genomic_DNA"/>
</dbReference>
<dbReference type="EMBL" id="BA000004">
    <property type="protein sequence ID" value="BAB03861.1"/>
    <property type="molecule type" value="Genomic_DNA"/>
</dbReference>
<dbReference type="PIR" id="F83667">
    <property type="entry name" value="F83667"/>
</dbReference>
<dbReference type="PIR" id="T44391">
    <property type="entry name" value="T44391"/>
</dbReference>
<dbReference type="RefSeq" id="WP_010896325.1">
    <property type="nucleotide sequence ID" value="NC_002570.2"/>
</dbReference>
<dbReference type="SMR" id="Q9Z9K6"/>
<dbReference type="STRING" id="272558.gene:10725982"/>
<dbReference type="GeneID" id="87595683"/>
<dbReference type="KEGG" id="bha:BH0142"/>
<dbReference type="eggNOG" id="COG0255">
    <property type="taxonomic scope" value="Bacteria"/>
</dbReference>
<dbReference type="HOGENOM" id="CLU_158491_5_2_9"/>
<dbReference type="OrthoDB" id="9815192at2"/>
<dbReference type="Proteomes" id="UP000001258">
    <property type="component" value="Chromosome"/>
</dbReference>
<dbReference type="GO" id="GO:0022625">
    <property type="term" value="C:cytosolic large ribosomal subunit"/>
    <property type="evidence" value="ECO:0007669"/>
    <property type="project" value="TreeGrafter"/>
</dbReference>
<dbReference type="GO" id="GO:0003735">
    <property type="term" value="F:structural constituent of ribosome"/>
    <property type="evidence" value="ECO:0007669"/>
    <property type="project" value="InterPro"/>
</dbReference>
<dbReference type="GO" id="GO:0006412">
    <property type="term" value="P:translation"/>
    <property type="evidence" value="ECO:0007669"/>
    <property type="project" value="UniProtKB-UniRule"/>
</dbReference>
<dbReference type="CDD" id="cd00427">
    <property type="entry name" value="Ribosomal_L29_HIP"/>
    <property type="match status" value="1"/>
</dbReference>
<dbReference type="FunFam" id="1.10.287.310:FF:000001">
    <property type="entry name" value="50S ribosomal protein L29"/>
    <property type="match status" value="1"/>
</dbReference>
<dbReference type="Gene3D" id="1.10.287.310">
    <property type="match status" value="1"/>
</dbReference>
<dbReference type="HAMAP" id="MF_00374">
    <property type="entry name" value="Ribosomal_uL29"/>
    <property type="match status" value="1"/>
</dbReference>
<dbReference type="InterPro" id="IPR050063">
    <property type="entry name" value="Ribosomal_protein_uL29"/>
</dbReference>
<dbReference type="InterPro" id="IPR001854">
    <property type="entry name" value="Ribosomal_uL29"/>
</dbReference>
<dbReference type="InterPro" id="IPR018254">
    <property type="entry name" value="Ribosomal_uL29_CS"/>
</dbReference>
<dbReference type="InterPro" id="IPR036049">
    <property type="entry name" value="Ribosomal_uL29_sf"/>
</dbReference>
<dbReference type="NCBIfam" id="TIGR00012">
    <property type="entry name" value="L29"/>
    <property type="match status" value="1"/>
</dbReference>
<dbReference type="PANTHER" id="PTHR10916">
    <property type="entry name" value="60S RIBOSOMAL PROTEIN L35/50S RIBOSOMAL PROTEIN L29"/>
    <property type="match status" value="1"/>
</dbReference>
<dbReference type="PANTHER" id="PTHR10916:SF0">
    <property type="entry name" value="LARGE RIBOSOMAL SUBUNIT PROTEIN UL29C"/>
    <property type="match status" value="1"/>
</dbReference>
<dbReference type="Pfam" id="PF00831">
    <property type="entry name" value="Ribosomal_L29"/>
    <property type="match status" value="1"/>
</dbReference>
<dbReference type="SUPFAM" id="SSF46561">
    <property type="entry name" value="Ribosomal protein L29 (L29p)"/>
    <property type="match status" value="1"/>
</dbReference>
<dbReference type="PROSITE" id="PS00579">
    <property type="entry name" value="RIBOSOMAL_L29"/>
    <property type="match status" value="1"/>
</dbReference>
<keyword id="KW-1185">Reference proteome</keyword>
<keyword id="KW-0687">Ribonucleoprotein</keyword>
<keyword id="KW-0689">Ribosomal protein</keyword>
<protein>
    <recommendedName>
        <fullName evidence="1">Large ribosomal subunit protein uL29</fullName>
    </recommendedName>
    <alternativeName>
        <fullName>50S ribosomal protein L29</fullName>
    </alternativeName>
</protein>
<name>RL29_HALH5</name>
<accession>Q9Z9K6</accession>
<accession>Q9KGD8</accession>